<protein>
    <recommendedName>
        <fullName evidence="5">Olfactory receptor 9G19</fullName>
    </recommendedName>
    <alternativeName>
        <fullName evidence="8">Olfactory receptor 1013</fullName>
    </alternativeName>
    <alternativeName>
        <fullName evidence="6">Olfactory receptor 213-2</fullName>
    </alternativeName>
</protein>
<name>O9G19_MOUSE</name>
<sequence>MDQNNNTVSEFIMLGFTTDPVIQKVLFAVFLVVYTLTLMGNSSLIMLICNDSRLHTPMYFFIGNLSFLDLGLSSVYTPKILETCISEDKSISFAGCVAQFFFSAALDYTECYLLAAMAYDRYVAISKPLLYSQAMSLKLCVCFVVASYVGGFINSVIITKDTFALTFCNDNVIDDFFCDIPPLVKLACGKKKSFQSVLFFLLTSNVIIPIVFILATYLFIIATILRIRSTQGRLKAFSTCSSHLISVTLYYGSILYIYARPRSSYSLDRDKIVSTFYTVVFPMLNPLIYSLRNKDVKEALNKLLK</sequence>
<organism>
    <name type="scientific">Mus musculus</name>
    <name type="common">Mouse</name>
    <dbReference type="NCBI Taxonomy" id="10090"/>
    <lineage>
        <taxon>Eukaryota</taxon>
        <taxon>Metazoa</taxon>
        <taxon>Chordata</taxon>
        <taxon>Craniata</taxon>
        <taxon>Vertebrata</taxon>
        <taxon>Euteleostomi</taxon>
        <taxon>Mammalia</taxon>
        <taxon>Eutheria</taxon>
        <taxon>Euarchontoglires</taxon>
        <taxon>Glires</taxon>
        <taxon>Rodentia</taxon>
        <taxon>Myomorpha</taxon>
        <taxon>Muroidea</taxon>
        <taxon>Muridae</taxon>
        <taxon>Murinae</taxon>
        <taxon>Mus</taxon>
        <taxon>Mus</taxon>
    </lineage>
</organism>
<comment type="function">
    <text evidence="3 4 5">Odorant receptor.</text>
</comment>
<comment type="subcellular location">
    <subcellularLocation>
        <location evidence="5">Cell membrane</location>
        <topology evidence="1">Multi-pass membrane protein</topology>
    </subcellularLocation>
</comment>
<comment type="similarity">
    <text evidence="2">Belongs to the G-protein coupled receptor 1 family.</text>
</comment>
<gene>
    <name evidence="10" type="primary">Or9g19</name>
    <name evidence="6" type="synonym">Mor213-2</name>
    <name evidence="7 10" type="synonym">Olfr1013</name>
</gene>
<feature type="chain" id="PRO_0000393947" description="Olfactory receptor 9G19">
    <location>
        <begin position="1"/>
        <end position="305"/>
    </location>
</feature>
<feature type="topological domain" description="Extracellular" evidence="1">
    <location>
        <begin position="1"/>
        <end position="24"/>
    </location>
</feature>
<feature type="transmembrane region" description="Helical; Name=1" evidence="1">
    <location>
        <begin position="25"/>
        <end position="45"/>
    </location>
</feature>
<feature type="topological domain" description="Cytoplasmic" evidence="1">
    <location>
        <begin position="46"/>
        <end position="55"/>
    </location>
</feature>
<feature type="transmembrane region" description="Helical; Name=2" evidence="1">
    <location>
        <begin position="56"/>
        <end position="76"/>
    </location>
</feature>
<feature type="topological domain" description="Extracellular" evidence="1">
    <location>
        <begin position="77"/>
        <end position="96"/>
    </location>
</feature>
<feature type="transmembrane region" description="Helical; Name=3" evidence="1">
    <location>
        <begin position="97"/>
        <end position="117"/>
    </location>
</feature>
<feature type="topological domain" description="Cytoplasmic" evidence="1">
    <location>
        <begin position="118"/>
        <end position="138"/>
    </location>
</feature>
<feature type="transmembrane region" description="Helical; Name=4" evidence="1">
    <location>
        <begin position="139"/>
        <end position="159"/>
    </location>
</feature>
<feature type="topological domain" description="Extracellular" evidence="1">
    <location>
        <begin position="160"/>
        <end position="204"/>
    </location>
</feature>
<feature type="transmembrane region" description="Helical; Name=5" evidence="1">
    <location>
        <begin position="205"/>
        <end position="225"/>
    </location>
</feature>
<feature type="topological domain" description="Cytoplasmic" evidence="1">
    <location>
        <begin position="226"/>
        <end position="236"/>
    </location>
</feature>
<feature type="transmembrane region" description="Helical; Name=6" evidence="1">
    <location>
        <begin position="237"/>
        <end position="257"/>
    </location>
</feature>
<feature type="topological domain" description="Extracellular" evidence="1">
    <location>
        <begin position="258"/>
        <end position="270"/>
    </location>
</feature>
<feature type="transmembrane region" description="Helical; Name=7" evidence="1">
    <location>
        <begin position="271"/>
        <end position="291"/>
    </location>
</feature>
<feature type="topological domain" description="Cytoplasmic" evidence="1">
    <location>
        <begin position="292"/>
        <end position="305"/>
    </location>
</feature>
<feature type="disulfide bond" evidence="2">
    <location>
        <begin position="96"/>
        <end position="178"/>
    </location>
</feature>
<feature type="sequence conflict" description="In Ref. 1; AAL60996." evidence="5" ref="1">
    <original>V</original>
    <variation>A</variation>
    <location>
        <position position="145"/>
    </location>
</feature>
<dbReference type="EMBL" id="AY073333">
    <property type="protein sequence ID" value="AAL60996.1"/>
    <property type="molecule type" value="Genomic_DNA"/>
</dbReference>
<dbReference type="EMBL" id="AY318208">
    <property type="protein sequence ID" value="AAP71464.1"/>
    <property type="molecule type" value="Genomic_DNA"/>
</dbReference>
<dbReference type="EMBL" id="AL929285">
    <property type="protein sequence ID" value="CAM26408.1"/>
    <property type="molecule type" value="Genomic_DNA"/>
</dbReference>
<dbReference type="EMBL" id="CH466519">
    <property type="protein sequence ID" value="EDL27336.1"/>
    <property type="molecule type" value="Genomic_DNA"/>
</dbReference>
<dbReference type="CCDS" id="CCDS16218.1"/>
<dbReference type="RefSeq" id="NP_666973.2">
    <property type="nucleotide sequence ID" value="NM_146762.2"/>
</dbReference>
<dbReference type="SMR" id="Q7TR96"/>
<dbReference type="FunCoup" id="Q7TR96">
    <property type="interactions" value="1162"/>
</dbReference>
<dbReference type="STRING" id="10090.ENSMUSP00000150201"/>
<dbReference type="PaxDb" id="10090-ENSMUSP00000068173"/>
<dbReference type="Ensembl" id="ENSMUST00000065626.3">
    <property type="protein sequence ID" value="ENSMUSP00000068173.3"/>
    <property type="gene ID" value="ENSMUSG00000053287.5"/>
</dbReference>
<dbReference type="Ensembl" id="ENSMUST00000216397.3">
    <property type="protein sequence ID" value="ENSMUSP00000150201.2"/>
    <property type="gene ID" value="ENSMUSG00000053287.5"/>
</dbReference>
<dbReference type="GeneID" id="258757"/>
<dbReference type="KEGG" id="mmu:258757"/>
<dbReference type="UCSC" id="uc008kku.1">
    <property type="organism name" value="mouse"/>
</dbReference>
<dbReference type="AGR" id="MGI:3030847"/>
<dbReference type="CTD" id="258757"/>
<dbReference type="MGI" id="MGI:3030847">
    <property type="gene designation" value="Or9g19"/>
</dbReference>
<dbReference type="VEuPathDB" id="HostDB:ENSMUSG00000053287"/>
<dbReference type="eggNOG" id="ENOG502T862">
    <property type="taxonomic scope" value="Eukaryota"/>
</dbReference>
<dbReference type="GeneTree" id="ENSGT00940000154333"/>
<dbReference type="HOGENOM" id="CLU_012526_1_0_1"/>
<dbReference type="InParanoid" id="Q7TR96"/>
<dbReference type="OMA" id="MEWINHT"/>
<dbReference type="OrthoDB" id="9829410at2759"/>
<dbReference type="PhylomeDB" id="Q7TR96"/>
<dbReference type="TreeFam" id="TF352735"/>
<dbReference type="BioGRID-ORCS" id="258757">
    <property type="hits" value="0 hits in 71 CRISPR screens"/>
</dbReference>
<dbReference type="PRO" id="PR:Q7TR96"/>
<dbReference type="Proteomes" id="UP000000589">
    <property type="component" value="Chromosome 2"/>
</dbReference>
<dbReference type="RNAct" id="Q7TR96">
    <property type="molecule type" value="protein"/>
</dbReference>
<dbReference type="GO" id="GO:0016020">
    <property type="term" value="C:membrane"/>
    <property type="evidence" value="ECO:0000247"/>
    <property type="project" value="MGI"/>
</dbReference>
<dbReference type="GO" id="GO:0005886">
    <property type="term" value="C:plasma membrane"/>
    <property type="evidence" value="ECO:0007669"/>
    <property type="project" value="UniProtKB-SubCell"/>
</dbReference>
<dbReference type="GO" id="GO:0004930">
    <property type="term" value="F:G protein-coupled receptor activity"/>
    <property type="evidence" value="ECO:0007669"/>
    <property type="project" value="UniProtKB-KW"/>
</dbReference>
<dbReference type="GO" id="GO:0004984">
    <property type="term" value="F:olfactory receptor activity"/>
    <property type="evidence" value="ECO:0000247"/>
    <property type="project" value="MGI"/>
</dbReference>
<dbReference type="GO" id="GO:0007186">
    <property type="term" value="P:G protein-coupled receptor signaling pathway"/>
    <property type="evidence" value="ECO:0000247"/>
    <property type="project" value="MGI"/>
</dbReference>
<dbReference type="GO" id="GO:0007608">
    <property type="term" value="P:sensory perception of smell"/>
    <property type="evidence" value="ECO:0000247"/>
    <property type="project" value="MGI"/>
</dbReference>
<dbReference type="FunFam" id="1.20.1070.10:FF:000003">
    <property type="entry name" value="Olfactory receptor"/>
    <property type="match status" value="1"/>
</dbReference>
<dbReference type="Gene3D" id="1.20.1070.10">
    <property type="entry name" value="Rhodopsin 7-helix transmembrane proteins"/>
    <property type="match status" value="1"/>
</dbReference>
<dbReference type="InterPro" id="IPR000276">
    <property type="entry name" value="GPCR_Rhodpsn"/>
</dbReference>
<dbReference type="InterPro" id="IPR017452">
    <property type="entry name" value="GPCR_Rhodpsn_7TM"/>
</dbReference>
<dbReference type="InterPro" id="IPR000725">
    <property type="entry name" value="Olfact_rcpt"/>
</dbReference>
<dbReference type="PANTHER" id="PTHR48018">
    <property type="entry name" value="OLFACTORY RECEPTOR"/>
    <property type="match status" value="1"/>
</dbReference>
<dbReference type="Pfam" id="PF13853">
    <property type="entry name" value="7tm_4"/>
    <property type="match status" value="1"/>
</dbReference>
<dbReference type="PRINTS" id="PR00237">
    <property type="entry name" value="GPCRRHODOPSN"/>
</dbReference>
<dbReference type="PRINTS" id="PR00245">
    <property type="entry name" value="OLFACTORYR"/>
</dbReference>
<dbReference type="SUPFAM" id="SSF81321">
    <property type="entry name" value="Family A G protein-coupled receptor-like"/>
    <property type="match status" value="1"/>
</dbReference>
<dbReference type="PROSITE" id="PS00237">
    <property type="entry name" value="G_PROTEIN_RECEP_F1_1"/>
    <property type="match status" value="1"/>
</dbReference>
<dbReference type="PROSITE" id="PS50262">
    <property type="entry name" value="G_PROTEIN_RECEP_F1_2"/>
    <property type="match status" value="1"/>
</dbReference>
<keyword id="KW-1003">Cell membrane</keyword>
<keyword id="KW-1015">Disulfide bond</keyword>
<keyword id="KW-0297">G-protein coupled receptor</keyword>
<keyword id="KW-0472">Membrane</keyword>
<keyword id="KW-0552">Olfaction</keyword>
<keyword id="KW-0675">Receptor</keyword>
<keyword id="KW-1185">Reference proteome</keyword>
<keyword id="KW-0716">Sensory transduction</keyword>
<keyword id="KW-0807">Transducer</keyword>
<keyword id="KW-0812">Transmembrane</keyword>
<keyword id="KW-1133">Transmembrane helix</keyword>
<proteinExistence type="inferred from homology"/>
<evidence type="ECO:0000255" key="1"/>
<evidence type="ECO:0000255" key="2">
    <source>
        <dbReference type="PROSITE-ProRule" id="PRU00521"/>
    </source>
</evidence>
<evidence type="ECO:0000269" key="3">
    <source>
    </source>
</evidence>
<evidence type="ECO:0000269" key="4">
    <source>
    </source>
</evidence>
<evidence type="ECO:0000305" key="5"/>
<evidence type="ECO:0000312" key="6">
    <source>
        <dbReference type="EMBL" id="AAL60996.1"/>
    </source>
</evidence>
<evidence type="ECO:0000312" key="7">
    <source>
        <dbReference type="EMBL" id="AAP71464.1"/>
    </source>
</evidence>
<evidence type="ECO:0000312" key="8">
    <source>
        <dbReference type="EMBL" id="CAM26408.1"/>
    </source>
</evidence>
<evidence type="ECO:0000312" key="9">
    <source>
        <dbReference type="EMBL" id="EDL27336.1"/>
    </source>
</evidence>
<evidence type="ECO:0000312" key="10">
    <source>
        <dbReference type="MGI" id="MGI:3030847"/>
    </source>
</evidence>
<reference evidence="6" key="1">
    <citation type="journal article" date="2002" name="Nat. Neurosci.">
        <title>The olfactory receptor gene superfamily of the mouse.</title>
        <authorList>
            <person name="Zhang X."/>
            <person name="Firestein S."/>
        </authorList>
    </citation>
    <scope>NUCLEOTIDE SEQUENCE [GENOMIC DNA]</scope>
</reference>
<reference evidence="7" key="2">
    <citation type="journal article" date="2003" name="Genome Biol.">
        <title>Odorant receptor expressed sequence tags demonstrate olfactory expression of over 400 genes, extensive alternate splicing and unequal expression levels.</title>
        <authorList>
            <person name="Young J.M."/>
            <person name="Shykind B.M."/>
            <person name="Lane R.P."/>
            <person name="Tonnes-Priddy L."/>
            <person name="Ross J.A."/>
            <person name="Walker M."/>
            <person name="Williams E.M."/>
            <person name="Trask B.J."/>
        </authorList>
    </citation>
    <scope>NUCLEOTIDE SEQUENCE [GENOMIC DNA]</scope>
</reference>
<reference evidence="8" key="3">
    <citation type="journal article" date="2009" name="PLoS Biol.">
        <title>Lineage-specific biology revealed by a finished genome assembly of the mouse.</title>
        <authorList>
            <person name="Church D.M."/>
            <person name="Goodstadt L."/>
            <person name="Hillier L.W."/>
            <person name="Zody M.C."/>
            <person name="Goldstein S."/>
            <person name="She X."/>
            <person name="Bult C.J."/>
            <person name="Agarwala R."/>
            <person name="Cherry J.L."/>
            <person name="DiCuccio M."/>
            <person name="Hlavina W."/>
            <person name="Kapustin Y."/>
            <person name="Meric P."/>
            <person name="Maglott D."/>
            <person name="Birtle Z."/>
            <person name="Marques A.C."/>
            <person name="Graves T."/>
            <person name="Zhou S."/>
            <person name="Teague B."/>
            <person name="Potamousis K."/>
            <person name="Churas C."/>
            <person name="Place M."/>
            <person name="Herschleb J."/>
            <person name="Runnheim R."/>
            <person name="Forrest D."/>
            <person name="Amos-Landgraf J."/>
            <person name="Schwartz D.C."/>
            <person name="Cheng Z."/>
            <person name="Lindblad-Toh K."/>
            <person name="Eichler E.E."/>
            <person name="Ponting C.P."/>
        </authorList>
    </citation>
    <scope>NUCLEOTIDE SEQUENCE [LARGE SCALE GENOMIC DNA]</scope>
    <source>
        <strain>C57BL/6J</strain>
    </source>
</reference>
<reference evidence="9" key="4">
    <citation type="submission" date="2005-07" db="EMBL/GenBank/DDBJ databases">
        <authorList>
            <person name="Mural R.J."/>
            <person name="Adams M.D."/>
            <person name="Myers E.W."/>
            <person name="Smith H.O."/>
            <person name="Venter J.C."/>
        </authorList>
    </citation>
    <scope>NUCLEOTIDE SEQUENCE [LARGE SCALE GENOMIC DNA]</scope>
</reference>
<accession>Q7TR96</accession>
<accession>Q8VG30</accession>